<organism>
    <name type="scientific">Ectopseudomonas mendocina (strain ymp)</name>
    <name type="common">Pseudomonas mendocina</name>
    <dbReference type="NCBI Taxonomy" id="399739"/>
    <lineage>
        <taxon>Bacteria</taxon>
        <taxon>Pseudomonadati</taxon>
        <taxon>Pseudomonadota</taxon>
        <taxon>Gammaproteobacteria</taxon>
        <taxon>Pseudomonadales</taxon>
        <taxon>Pseudomonadaceae</taxon>
        <taxon>Ectopseudomonas</taxon>
    </lineage>
</organism>
<reference key="1">
    <citation type="submission" date="2007-04" db="EMBL/GenBank/DDBJ databases">
        <title>Complete sequence of Pseudomonas mendocina ymp.</title>
        <authorList>
            <consortium name="US DOE Joint Genome Institute"/>
            <person name="Copeland A."/>
            <person name="Lucas S."/>
            <person name="Lapidus A."/>
            <person name="Barry K."/>
            <person name="Glavina del Rio T."/>
            <person name="Dalin E."/>
            <person name="Tice H."/>
            <person name="Pitluck S."/>
            <person name="Kiss H."/>
            <person name="Brettin T."/>
            <person name="Detter J.C."/>
            <person name="Bruce D."/>
            <person name="Han C."/>
            <person name="Schmutz J."/>
            <person name="Larimer F."/>
            <person name="Land M."/>
            <person name="Hauser L."/>
            <person name="Kyrpides N."/>
            <person name="Mikhailova N."/>
            <person name="Hersman L."/>
            <person name="Dubois J."/>
            <person name="Maurice P."/>
            <person name="Richardson P."/>
        </authorList>
    </citation>
    <scope>NUCLEOTIDE SEQUENCE [LARGE SCALE GENOMIC DNA]</scope>
    <source>
        <strain>ymp</strain>
    </source>
</reference>
<feature type="chain" id="PRO_1000069830" description="4-hydroxybenzoate octaprenyltransferase">
    <location>
        <begin position="1"/>
        <end position="296"/>
    </location>
</feature>
<feature type="transmembrane region" description="Helical" evidence="1">
    <location>
        <begin position="29"/>
        <end position="49"/>
    </location>
</feature>
<feature type="transmembrane region" description="Helical" evidence="1">
    <location>
        <begin position="55"/>
        <end position="75"/>
    </location>
</feature>
<feature type="transmembrane region" description="Helical" evidence="1">
    <location>
        <begin position="102"/>
        <end position="122"/>
    </location>
</feature>
<feature type="transmembrane region" description="Helical" evidence="1">
    <location>
        <begin position="124"/>
        <end position="141"/>
    </location>
</feature>
<feature type="transmembrane region" description="Helical" evidence="1">
    <location>
        <begin position="146"/>
        <end position="166"/>
    </location>
</feature>
<feature type="transmembrane region" description="Helical" evidence="1">
    <location>
        <begin position="169"/>
        <end position="189"/>
    </location>
</feature>
<feature type="transmembrane region" description="Helical" evidence="1">
    <location>
        <begin position="216"/>
        <end position="236"/>
    </location>
</feature>
<feature type="transmembrane region" description="Helical" evidence="1">
    <location>
        <begin position="239"/>
        <end position="259"/>
    </location>
</feature>
<feature type="transmembrane region" description="Helical" evidence="1">
    <location>
        <begin position="271"/>
        <end position="291"/>
    </location>
</feature>
<protein>
    <recommendedName>
        <fullName evidence="1">4-hydroxybenzoate octaprenyltransferase</fullName>
        <ecNumber evidence="1">2.5.1.39</ecNumber>
    </recommendedName>
    <alternativeName>
        <fullName evidence="1">4-HB polyprenyltransferase</fullName>
    </alternativeName>
</protein>
<evidence type="ECO:0000255" key="1">
    <source>
        <dbReference type="HAMAP-Rule" id="MF_01635"/>
    </source>
</evidence>
<proteinExistence type="inferred from homology"/>
<keyword id="KW-0997">Cell inner membrane</keyword>
<keyword id="KW-1003">Cell membrane</keyword>
<keyword id="KW-0460">Magnesium</keyword>
<keyword id="KW-0472">Membrane</keyword>
<keyword id="KW-0808">Transferase</keyword>
<keyword id="KW-0812">Transmembrane</keyword>
<keyword id="KW-1133">Transmembrane helix</keyword>
<keyword id="KW-0831">Ubiquinone biosynthesis</keyword>
<sequence length="296" mass="33186">MYTRLLQSTTRLHPRAWDFIQLMRLDKPIGIYLLLWPTLWALWVAAEGVPSAKNLFIFVFGVILMRAAGCVINDYADRNFDGHVSRTRARPLASGKIQPREALVLFAVLVTASFVLVLFTNATTIWLSFGGLALAACYPFMKRYTFYPQVVLGAAFSWGMPMAFTAETGSLPPEAWLLYIANLLWTVAYDTYYAMADREDDLKIGVKSTAILFGDADRLIIASLQGLALLCLLLAGARFELGVWFHAGLLVAAACFVWEYHKTRNRKPMACFNAFLHNHWAGLAIFVGIVLDYALR</sequence>
<dbReference type="EC" id="2.5.1.39" evidence="1"/>
<dbReference type="EMBL" id="CP000680">
    <property type="protein sequence ID" value="ABP87156.1"/>
    <property type="molecule type" value="Genomic_DNA"/>
</dbReference>
<dbReference type="SMR" id="A4Y0P0"/>
<dbReference type="STRING" id="399739.Pmen_4409"/>
<dbReference type="KEGG" id="pmy:Pmen_4409"/>
<dbReference type="PATRIC" id="fig|399739.8.peg.4469"/>
<dbReference type="eggNOG" id="COG0382">
    <property type="taxonomic scope" value="Bacteria"/>
</dbReference>
<dbReference type="HOGENOM" id="CLU_034879_1_0_6"/>
<dbReference type="OrthoDB" id="9782418at2"/>
<dbReference type="UniPathway" id="UPA00232"/>
<dbReference type="GO" id="GO:0005886">
    <property type="term" value="C:plasma membrane"/>
    <property type="evidence" value="ECO:0007669"/>
    <property type="project" value="UniProtKB-SubCell"/>
</dbReference>
<dbReference type="GO" id="GO:0008412">
    <property type="term" value="F:4-hydroxybenzoate polyprenyltransferase activity"/>
    <property type="evidence" value="ECO:0007669"/>
    <property type="project" value="UniProtKB-UniRule"/>
</dbReference>
<dbReference type="GO" id="GO:0006744">
    <property type="term" value="P:ubiquinone biosynthetic process"/>
    <property type="evidence" value="ECO:0007669"/>
    <property type="project" value="UniProtKB-UniRule"/>
</dbReference>
<dbReference type="CDD" id="cd13959">
    <property type="entry name" value="PT_UbiA_COQ2"/>
    <property type="match status" value="1"/>
</dbReference>
<dbReference type="FunFam" id="1.10.357.140:FF:000002">
    <property type="entry name" value="4-hydroxybenzoate octaprenyltransferase"/>
    <property type="match status" value="1"/>
</dbReference>
<dbReference type="FunFam" id="1.20.120.1780:FF:000001">
    <property type="entry name" value="4-hydroxybenzoate octaprenyltransferase"/>
    <property type="match status" value="1"/>
</dbReference>
<dbReference type="Gene3D" id="1.10.357.140">
    <property type="entry name" value="UbiA prenyltransferase"/>
    <property type="match status" value="1"/>
</dbReference>
<dbReference type="Gene3D" id="1.20.120.1780">
    <property type="entry name" value="UbiA prenyltransferase"/>
    <property type="match status" value="1"/>
</dbReference>
<dbReference type="HAMAP" id="MF_01635">
    <property type="entry name" value="UbiA"/>
    <property type="match status" value="1"/>
</dbReference>
<dbReference type="InterPro" id="IPR006370">
    <property type="entry name" value="HB_polyprenyltransferase-like"/>
</dbReference>
<dbReference type="InterPro" id="IPR039653">
    <property type="entry name" value="Prenyltransferase"/>
</dbReference>
<dbReference type="InterPro" id="IPR000537">
    <property type="entry name" value="UbiA_prenyltransferase"/>
</dbReference>
<dbReference type="InterPro" id="IPR030470">
    <property type="entry name" value="UbiA_prenylTrfase_CS"/>
</dbReference>
<dbReference type="InterPro" id="IPR044878">
    <property type="entry name" value="UbiA_sf"/>
</dbReference>
<dbReference type="NCBIfam" id="TIGR01474">
    <property type="entry name" value="ubiA_proteo"/>
    <property type="match status" value="1"/>
</dbReference>
<dbReference type="PANTHER" id="PTHR11048:SF28">
    <property type="entry name" value="4-HYDROXYBENZOATE POLYPRENYLTRANSFERASE, MITOCHONDRIAL"/>
    <property type="match status" value="1"/>
</dbReference>
<dbReference type="PANTHER" id="PTHR11048">
    <property type="entry name" value="PRENYLTRANSFERASES"/>
    <property type="match status" value="1"/>
</dbReference>
<dbReference type="Pfam" id="PF01040">
    <property type="entry name" value="UbiA"/>
    <property type="match status" value="1"/>
</dbReference>
<dbReference type="PROSITE" id="PS00943">
    <property type="entry name" value="UBIA"/>
    <property type="match status" value="1"/>
</dbReference>
<accession>A4Y0P0</accession>
<gene>
    <name evidence="1" type="primary">ubiA</name>
    <name type="ordered locus">Pmen_4409</name>
</gene>
<name>UBIA_ECTM1</name>
<comment type="function">
    <text evidence="1">Catalyzes the prenylation of para-hydroxybenzoate (PHB) with an all-trans polyprenyl group. Mediates the second step in the final reaction sequence of ubiquinone-8 (UQ-8) biosynthesis, which is the condensation of the polyisoprenoid side chain with PHB, generating the first membrane-bound Q intermediate 3-octaprenyl-4-hydroxybenzoate.</text>
</comment>
<comment type="catalytic activity">
    <reaction evidence="1">
        <text>all-trans-octaprenyl diphosphate + 4-hydroxybenzoate = 4-hydroxy-3-(all-trans-octaprenyl)benzoate + diphosphate</text>
        <dbReference type="Rhea" id="RHEA:27782"/>
        <dbReference type="ChEBI" id="CHEBI:1617"/>
        <dbReference type="ChEBI" id="CHEBI:17879"/>
        <dbReference type="ChEBI" id="CHEBI:33019"/>
        <dbReference type="ChEBI" id="CHEBI:57711"/>
        <dbReference type="EC" id="2.5.1.39"/>
    </reaction>
</comment>
<comment type="cofactor">
    <cofactor evidence="1">
        <name>Mg(2+)</name>
        <dbReference type="ChEBI" id="CHEBI:18420"/>
    </cofactor>
</comment>
<comment type="pathway">
    <text evidence="1">Cofactor biosynthesis; ubiquinone biosynthesis.</text>
</comment>
<comment type="subcellular location">
    <subcellularLocation>
        <location evidence="1">Cell inner membrane</location>
        <topology evidence="1">Multi-pass membrane protein</topology>
    </subcellularLocation>
</comment>
<comment type="similarity">
    <text evidence="1">Belongs to the UbiA prenyltransferase family.</text>
</comment>